<organism>
    <name type="scientific">Trichodesmium erythraeum (strain IMS101)</name>
    <dbReference type="NCBI Taxonomy" id="203124"/>
    <lineage>
        <taxon>Bacteria</taxon>
        <taxon>Bacillati</taxon>
        <taxon>Cyanobacteriota</taxon>
        <taxon>Cyanophyceae</taxon>
        <taxon>Oscillatoriophycideae</taxon>
        <taxon>Oscillatoriales</taxon>
        <taxon>Microcoleaceae</taxon>
        <taxon>Trichodesmium</taxon>
    </lineage>
</organism>
<evidence type="ECO:0000250" key="1"/>
<evidence type="ECO:0000255" key="2">
    <source>
        <dbReference type="HAMAP-Rule" id="MF_00100"/>
    </source>
</evidence>
<evidence type="ECO:0000256" key="3">
    <source>
        <dbReference type="SAM" id="MobiDB-lite"/>
    </source>
</evidence>
<accession>Q10XM3</accession>
<protein>
    <recommendedName>
        <fullName evidence="2">Translation initiation factor IF-2</fullName>
    </recommendedName>
</protein>
<sequence>MNNGKVRIYELSKELNLENKDILAVCQRLNISVKSHSSTITESEAELIRTTAENLPHSPSLSAAPEKSNSQNQDSGIGYNEQKKQQILEVRKPKPLLEKSQQKNHSKINNNLVTTPPNTSVLNNQVERVGISRPNSSLKSETLKDNSEVGDNSLVQHPNRPLNKDNTVKENYVPQKTDSNEKSKVEVPKLVAPPARPAPPSLNRNLRNTGVNKPNQKNKKPKQEGKKRKDKEEKPFEKPAIVSKKENKDTSIEKPTIASKKENKDTFQNRESVKTSASDTSSQLKPKHREKPTVKLKQEQKPQLAPKPKLTTPLKEESTDVNLGLDLEGKEPEDNVAETVSYDLEKPRRKTIAPSKPTLTKDKKVSKWEEEEEDTSEVIQKNAKSSAKNKRLRLKPLLEDEDEELAELLNKPAPVTMSLSLARPAKPKSFTEKNKPQPGSNISNLKKKSSQSHESVQSESNEQTQSAELKPVEKLVISASMTVQELALALAIPETEIIRRLFMKGIAVNITESLDIPTIEMVVKEEGIPIEVPEEQSAAKKTTEILEETDLASLQRRPPVVTIMGHVDHGKTSLLDSIRATKVAAGEAGGITQHIGAYHVDVEHEGQMQQVVFLDTPGHEAFTAMRARGARVTDVAVLVVAADDGVQPQTIEAISHAKAAEVPLIVAINKIDKEEANPDRVKQELMEHGLVPEEWGGDAIMVPVSAIQKQNLDTLLEMILLVSEVEDLQANPERLAKGTVIEANLDKARGPVATLLVQNGTLKVGDIIVAGSVYGKVRAMIDDRGYRVDKASPSFAVEVLGLRDVPQAGDEFKVFKNEKEASAITTERADAKRESRIMRRTSLGAVSVRAQEGELKELNLILKGDVQGSIEAIVAALRQLPQKEVQLRLLLSGAGEVTETDIDLAAASEAVIIGFNTTMASGARQAADAAGVDVREYNVIYKLLDDIQGAMEGLLDPELIEEPLGQVEVRAVFTINRGAVAGCYVLSGKVVRNCKVRVRRNGEIVYQGILDSLRRMKDDVKEVNAGYECGVSFDNFNNWSEGDIIEAYQMVTKRRKLST</sequence>
<name>IF2_TRIEI</name>
<proteinExistence type="inferred from homology"/>
<comment type="function">
    <text evidence="2">One of the essential components for the initiation of protein synthesis. Protects formylmethionyl-tRNA from spontaneous hydrolysis and promotes its binding to the 30S ribosomal subunits. Also involved in the hydrolysis of GTP during the formation of the 70S ribosomal complex.</text>
</comment>
<comment type="subcellular location">
    <subcellularLocation>
        <location evidence="2">Cytoplasm</location>
    </subcellularLocation>
</comment>
<comment type="similarity">
    <text evidence="2">Belongs to the TRAFAC class translation factor GTPase superfamily. Classic translation factor GTPase family. IF-2 subfamily.</text>
</comment>
<dbReference type="EMBL" id="CP000393">
    <property type="protein sequence ID" value="ABG53001.1"/>
    <property type="molecule type" value="Genomic_DNA"/>
</dbReference>
<dbReference type="RefSeq" id="WP_011613331.1">
    <property type="nucleotide sequence ID" value="NC_008312.1"/>
</dbReference>
<dbReference type="SMR" id="Q10XM3"/>
<dbReference type="STRING" id="203124.Tery_3976"/>
<dbReference type="KEGG" id="ter:Tery_3976"/>
<dbReference type="eggNOG" id="COG0532">
    <property type="taxonomic scope" value="Bacteria"/>
</dbReference>
<dbReference type="HOGENOM" id="CLU_006301_7_0_3"/>
<dbReference type="OrthoDB" id="9811804at2"/>
<dbReference type="GO" id="GO:0005829">
    <property type="term" value="C:cytosol"/>
    <property type="evidence" value="ECO:0007669"/>
    <property type="project" value="TreeGrafter"/>
</dbReference>
<dbReference type="GO" id="GO:0005525">
    <property type="term" value="F:GTP binding"/>
    <property type="evidence" value="ECO:0007669"/>
    <property type="project" value="UniProtKB-KW"/>
</dbReference>
<dbReference type="GO" id="GO:0003924">
    <property type="term" value="F:GTPase activity"/>
    <property type="evidence" value="ECO:0007669"/>
    <property type="project" value="UniProtKB-UniRule"/>
</dbReference>
<dbReference type="GO" id="GO:0003743">
    <property type="term" value="F:translation initiation factor activity"/>
    <property type="evidence" value="ECO:0007669"/>
    <property type="project" value="UniProtKB-UniRule"/>
</dbReference>
<dbReference type="CDD" id="cd01887">
    <property type="entry name" value="IF2_eIF5B"/>
    <property type="match status" value="1"/>
</dbReference>
<dbReference type="CDD" id="cd03702">
    <property type="entry name" value="IF2_mtIF2_II"/>
    <property type="match status" value="1"/>
</dbReference>
<dbReference type="CDD" id="cd03692">
    <property type="entry name" value="mtIF2_IVc"/>
    <property type="match status" value="1"/>
</dbReference>
<dbReference type="FunFam" id="2.40.30.10:FF:000007">
    <property type="entry name" value="Translation initiation factor IF-2"/>
    <property type="match status" value="1"/>
</dbReference>
<dbReference type="FunFam" id="2.40.30.10:FF:000008">
    <property type="entry name" value="Translation initiation factor IF-2"/>
    <property type="match status" value="1"/>
</dbReference>
<dbReference type="FunFam" id="3.40.50.10050:FF:000001">
    <property type="entry name" value="Translation initiation factor IF-2"/>
    <property type="match status" value="1"/>
</dbReference>
<dbReference type="FunFam" id="3.40.50.300:FF:000019">
    <property type="entry name" value="Translation initiation factor IF-2"/>
    <property type="match status" value="1"/>
</dbReference>
<dbReference type="Gene3D" id="1.10.10.2480">
    <property type="match status" value="1"/>
</dbReference>
<dbReference type="Gene3D" id="3.40.50.300">
    <property type="entry name" value="P-loop containing nucleotide triphosphate hydrolases"/>
    <property type="match status" value="1"/>
</dbReference>
<dbReference type="Gene3D" id="2.40.30.10">
    <property type="entry name" value="Translation factors"/>
    <property type="match status" value="2"/>
</dbReference>
<dbReference type="Gene3D" id="3.40.50.10050">
    <property type="entry name" value="Translation initiation factor IF- 2, domain 3"/>
    <property type="match status" value="1"/>
</dbReference>
<dbReference type="HAMAP" id="MF_00100_B">
    <property type="entry name" value="IF_2_B"/>
    <property type="match status" value="1"/>
</dbReference>
<dbReference type="InterPro" id="IPR053905">
    <property type="entry name" value="EF-G-like_DII"/>
</dbReference>
<dbReference type="InterPro" id="IPR044145">
    <property type="entry name" value="IF2_II"/>
</dbReference>
<dbReference type="InterPro" id="IPR006847">
    <property type="entry name" value="IF2_N"/>
</dbReference>
<dbReference type="InterPro" id="IPR027417">
    <property type="entry name" value="P-loop_NTPase"/>
</dbReference>
<dbReference type="InterPro" id="IPR005225">
    <property type="entry name" value="Small_GTP-bd"/>
</dbReference>
<dbReference type="InterPro" id="IPR000795">
    <property type="entry name" value="T_Tr_GTP-bd_dom"/>
</dbReference>
<dbReference type="InterPro" id="IPR000178">
    <property type="entry name" value="TF_IF2_bacterial-like"/>
</dbReference>
<dbReference type="InterPro" id="IPR015760">
    <property type="entry name" value="TIF_IF2"/>
</dbReference>
<dbReference type="InterPro" id="IPR023115">
    <property type="entry name" value="TIF_IF2_dom3"/>
</dbReference>
<dbReference type="InterPro" id="IPR036925">
    <property type="entry name" value="TIF_IF2_dom3_sf"/>
</dbReference>
<dbReference type="InterPro" id="IPR009000">
    <property type="entry name" value="Transl_B-barrel_sf"/>
</dbReference>
<dbReference type="NCBIfam" id="TIGR00487">
    <property type="entry name" value="IF-2"/>
    <property type="match status" value="1"/>
</dbReference>
<dbReference type="NCBIfam" id="TIGR00231">
    <property type="entry name" value="small_GTP"/>
    <property type="match status" value="1"/>
</dbReference>
<dbReference type="PANTHER" id="PTHR43381:SF5">
    <property type="entry name" value="TR-TYPE G DOMAIN-CONTAINING PROTEIN"/>
    <property type="match status" value="1"/>
</dbReference>
<dbReference type="PANTHER" id="PTHR43381">
    <property type="entry name" value="TRANSLATION INITIATION FACTOR IF-2-RELATED"/>
    <property type="match status" value="1"/>
</dbReference>
<dbReference type="Pfam" id="PF22042">
    <property type="entry name" value="EF-G_D2"/>
    <property type="match status" value="1"/>
</dbReference>
<dbReference type="Pfam" id="PF00009">
    <property type="entry name" value="GTP_EFTU"/>
    <property type="match status" value="1"/>
</dbReference>
<dbReference type="Pfam" id="PF11987">
    <property type="entry name" value="IF-2"/>
    <property type="match status" value="1"/>
</dbReference>
<dbReference type="Pfam" id="PF04760">
    <property type="entry name" value="IF2_N"/>
    <property type="match status" value="2"/>
</dbReference>
<dbReference type="PRINTS" id="PR00315">
    <property type="entry name" value="ELONGATNFCT"/>
</dbReference>
<dbReference type="SUPFAM" id="SSF52156">
    <property type="entry name" value="Initiation factor IF2/eIF5b, domain 3"/>
    <property type="match status" value="1"/>
</dbReference>
<dbReference type="SUPFAM" id="SSF52540">
    <property type="entry name" value="P-loop containing nucleoside triphosphate hydrolases"/>
    <property type="match status" value="1"/>
</dbReference>
<dbReference type="SUPFAM" id="SSF50447">
    <property type="entry name" value="Translation proteins"/>
    <property type="match status" value="2"/>
</dbReference>
<dbReference type="PROSITE" id="PS51722">
    <property type="entry name" value="G_TR_2"/>
    <property type="match status" value="1"/>
</dbReference>
<dbReference type="PROSITE" id="PS01176">
    <property type="entry name" value="IF2"/>
    <property type="match status" value="1"/>
</dbReference>
<feature type="chain" id="PRO_1000008369" description="Translation initiation factor IF-2">
    <location>
        <begin position="1"/>
        <end position="1059"/>
    </location>
</feature>
<feature type="domain" description="tr-type G">
    <location>
        <begin position="556"/>
        <end position="733"/>
    </location>
</feature>
<feature type="region of interest" description="Disordered" evidence="3">
    <location>
        <begin position="55"/>
        <end position="81"/>
    </location>
</feature>
<feature type="region of interest" description="Disordered" evidence="3">
    <location>
        <begin position="93"/>
        <end position="394"/>
    </location>
</feature>
<feature type="region of interest" description="Disordered" evidence="3">
    <location>
        <begin position="418"/>
        <end position="468"/>
    </location>
</feature>
<feature type="region of interest" description="G1" evidence="1">
    <location>
        <begin position="565"/>
        <end position="572"/>
    </location>
</feature>
<feature type="region of interest" description="G2" evidence="1">
    <location>
        <begin position="590"/>
        <end position="594"/>
    </location>
</feature>
<feature type="region of interest" description="G3" evidence="1">
    <location>
        <begin position="615"/>
        <end position="618"/>
    </location>
</feature>
<feature type="region of interest" description="G4" evidence="1">
    <location>
        <begin position="669"/>
        <end position="672"/>
    </location>
</feature>
<feature type="region of interest" description="G5" evidence="1">
    <location>
        <begin position="705"/>
        <end position="707"/>
    </location>
</feature>
<feature type="compositionally biased region" description="Polar residues" evidence="3">
    <location>
        <begin position="55"/>
        <end position="75"/>
    </location>
</feature>
<feature type="compositionally biased region" description="Polar residues" evidence="3">
    <location>
        <begin position="107"/>
        <end position="126"/>
    </location>
</feature>
<feature type="compositionally biased region" description="Basic and acidic residues" evidence="3">
    <location>
        <begin position="178"/>
        <end position="187"/>
    </location>
</feature>
<feature type="compositionally biased region" description="Polar residues" evidence="3">
    <location>
        <begin position="202"/>
        <end position="211"/>
    </location>
</feature>
<feature type="compositionally biased region" description="Basic residues" evidence="3">
    <location>
        <begin position="216"/>
        <end position="229"/>
    </location>
</feature>
<feature type="compositionally biased region" description="Basic and acidic residues" evidence="3">
    <location>
        <begin position="230"/>
        <end position="252"/>
    </location>
</feature>
<feature type="compositionally biased region" description="Basic and acidic residues" evidence="3">
    <location>
        <begin position="259"/>
        <end position="273"/>
    </location>
</feature>
<feature type="compositionally biased region" description="Polar residues" evidence="3">
    <location>
        <begin position="274"/>
        <end position="284"/>
    </location>
</feature>
<feature type="compositionally biased region" description="Basic and acidic residues" evidence="3">
    <location>
        <begin position="291"/>
        <end position="300"/>
    </location>
</feature>
<feature type="compositionally biased region" description="Basic and acidic residues" evidence="3">
    <location>
        <begin position="359"/>
        <end position="368"/>
    </location>
</feature>
<feature type="compositionally biased region" description="Low complexity" evidence="3">
    <location>
        <begin position="452"/>
        <end position="463"/>
    </location>
</feature>
<feature type="binding site" evidence="2">
    <location>
        <begin position="565"/>
        <end position="572"/>
    </location>
    <ligand>
        <name>GTP</name>
        <dbReference type="ChEBI" id="CHEBI:37565"/>
    </ligand>
</feature>
<feature type="binding site" evidence="2">
    <location>
        <begin position="615"/>
        <end position="619"/>
    </location>
    <ligand>
        <name>GTP</name>
        <dbReference type="ChEBI" id="CHEBI:37565"/>
    </ligand>
</feature>
<feature type="binding site" evidence="2">
    <location>
        <begin position="669"/>
        <end position="672"/>
    </location>
    <ligand>
        <name>GTP</name>
        <dbReference type="ChEBI" id="CHEBI:37565"/>
    </ligand>
</feature>
<keyword id="KW-0963">Cytoplasm</keyword>
<keyword id="KW-0342">GTP-binding</keyword>
<keyword id="KW-0396">Initiation factor</keyword>
<keyword id="KW-0547">Nucleotide-binding</keyword>
<keyword id="KW-0648">Protein biosynthesis</keyword>
<gene>
    <name evidence="2" type="primary">infB</name>
    <name type="ordered locus">Tery_3976</name>
</gene>
<reference key="1">
    <citation type="journal article" date="2015" name="Proc. Natl. Acad. Sci. U.S.A.">
        <title>Trichodesmium genome maintains abundant, widespread noncoding DNA in situ, despite oligotrophic lifestyle.</title>
        <authorList>
            <person name="Walworth N."/>
            <person name="Pfreundt U."/>
            <person name="Nelson W.C."/>
            <person name="Mincer T."/>
            <person name="Heidelberg J.F."/>
            <person name="Fu F."/>
            <person name="Waterbury J.B."/>
            <person name="Glavina del Rio T."/>
            <person name="Goodwin L."/>
            <person name="Kyrpides N.C."/>
            <person name="Land M.L."/>
            <person name="Woyke T."/>
            <person name="Hutchins D.A."/>
            <person name="Hess W.R."/>
            <person name="Webb E.A."/>
        </authorList>
    </citation>
    <scope>NUCLEOTIDE SEQUENCE [LARGE SCALE GENOMIC DNA]</scope>
    <source>
        <strain>IMS101</strain>
    </source>
</reference>